<proteinExistence type="evidence at protein level"/>
<keyword id="KW-0025">Alternative splicing</keyword>
<keyword id="KW-0175">Coiled coil</keyword>
<keyword id="KW-0963">Cytoplasm</keyword>
<keyword id="KW-0206">Cytoskeleton</keyword>
<keyword id="KW-0597">Phosphoprotein</keyword>
<keyword id="KW-1185">Reference proteome</keyword>
<organism>
    <name type="scientific">Rattus norvegicus</name>
    <name type="common">Rat</name>
    <dbReference type="NCBI Taxonomy" id="10116"/>
    <lineage>
        <taxon>Eukaryota</taxon>
        <taxon>Metazoa</taxon>
        <taxon>Chordata</taxon>
        <taxon>Craniata</taxon>
        <taxon>Vertebrata</taxon>
        <taxon>Euteleostomi</taxon>
        <taxon>Mammalia</taxon>
        <taxon>Eutheria</taxon>
        <taxon>Euarchontoglires</taxon>
        <taxon>Glires</taxon>
        <taxon>Rodentia</taxon>
        <taxon>Myomorpha</taxon>
        <taxon>Muroidea</taxon>
        <taxon>Muridae</taxon>
        <taxon>Murinae</taxon>
        <taxon>Rattus</taxon>
    </lineage>
</organism>
<comment type="function">
    <text evidence="4 5">By acting through a filamin-A/F-actin axis, it controls the start of neocortical cell migration from the ventricular zone. May be able to induce the degradation of Filamin A.</text>
</comment>
<comment type="subunit">
    <text evidence="4 5">Interacts with FLNA. Interacts with RHOD (in GTP-bound form).</text>
</comment>
<comment type="subcellular location">
    <subcellularLocation>
        <location evidence="4 5">Cytoplasm</location>
        <location evidence="4 5">Cytoskeleton</location>
    </subcellularLocation>
</comment>
<comment type="subcellular location">
    <molecule>Isoform 1</molecule>
    <subcellularLocation>
        <location evidence="4">Cytoplasm</location>
        <location evidence="4">Cytoskeleton</location>
    </subcellularLocation>
    <subcellularLocation>
        <location evidence="4">Cytoplasm</location>
        <location evidence="4">Cytoskeleton</location>
        <location evidence="4">Stress fiber</location>
    </subcellularLocation>
    <text evidence="4">Localized along actin stress fibers, except at their ends, suggesting colocalization with F-actin (fiber-like).</text>
</comment>
<comment type="subcellular location">
    <molecule>Isoform 2</molecule>
    <subcellularLocation>
        <location evidence="4">Cytoplasm</location>
        <location evidence="4">Cytoskeleton</location>
    </subcellularLocation>
    <text evidence="4">Punctate distribution in the cytoplasm distinct from that of F-actin.</text>
</comment>
<comment type="alternative products">
    <event type="alternative splicing"/>
    <isoform>
        <id>Q8K4T4-1</id>
        <name>1</name>
        <name>L-FILIP</name>
        <sequence type="displayed"/>
    </isoform>
    <isoform>
        <id>Q8K4T4-2</id>
        <name>2</name>
        <name>S-FILIP</name>
        <sequence type="described" ref="VSP_018346"/>
    </isoform>
</comment>
<comment type="tissue specificity">
    <text evidence="4 5">Expressed in muscle tissue, including heart. Found in cortical ventricular zone.</text>
</comment>
<comment type="similarity">
    <text evidence="7">Belongs to the FILIP1 family.</text>
</comment>
<protein>
    <recommendedName>
        <fullName>Filamin-A-interacting protein 1</fullName>
        <shortName>FILIP</shortName>
    </recommendedName>
</protein>
<evidence type="ECO:0000250" key="1">
    <source>
        <dbReference type="UniProtKB" id="Q9CS72"/>
    </source>
</evidence>
<evidence type="ECO:0000255" key="2"/>
<evidence type="ECO:0000256" key="3">
    <source>
        <dbReference type="SAM" id="MobiDB-lite"/>
    </source>
</evidence>
<evidence type="ECO:0000269" key="4">
    <source>
    </source>
</evidence>
<evidence type="ECO:0000269" key="5">
    <source>
    </source>
</evidence>
<evidence type="ECO:0000303" key="6">
    <source>
    </source>
</evidence>
<evidence type="ECO:0000305" key="7"/>
<evidence type="ECO:0007744" key="8">
    <source>
    </source>
</evidence>
<accession>Q8K4T4</accession>
<accession>Q8JZS5</accession>
<gene>
    <name type="primary">Filip1</name>
</gene>
<sequence length="1212" mass="137753">MRSRNQGGESSSNGHVSCPKSSIISSDGGKGPSEDAKKNKANRKEEDVMASGTIKRHLKPSGESEKKTKKSVELSKEDLIQLLSIMEGELQAREDVIHMLRTEKTKPEVLEAHYGSAEPEKVLRVLHRDAILAQEKSIGEDVYEKPISELDRLEEKQKETYRRMLEQLLLAEKCHRRTVYELENEKHKHTDYMNKSDDFTNLLEQERERLKKLLEQEKAYQARKEKENAKRLNKLRDELVKLKSFALMLVDERQMHIEQLGLQSQKVQDLTQKLREEEEKLKAVTYKSKEDRQKLLKLEVDFEHKASRFSQEHEEMNAKLANQESHNRQLRLKLVGLSQRIEELEETNKSLQKAEEELQELREKIAKGECGNSSLMAEVESLRKRVLEMEGKDEEITKTEAQCRELKKKLQEEEHHSKELRLEVEKLQKRMSELEKLEEAFSRSKSECTQLHLNLEKEKNLTKDLLNELEVVKSRVKELECSESRLEKAELSLKDDLTKLKSFTVMLVDERKNMMEKIKQEERKVDGLNKNFKVEQGKVMDVTEKLIEESKKLLKLKSEMEEKEYSLTKERDELMGKLRSEEERSCELSCSVDLLKKRLDGIEEVEREINRGRSCKGSEFTCPEDNKIRELTLEIERLKKRLQQLEVVEGDLMKTEDEYDQLEQKFRTEQDKANFLSQQLEEIKHQMAKHKAIEKGEAVSQEAELRHRFRLEEAKSRDLQAEVQALKEKIHELMNKEDQLSQLQVDYSVLQQRFMEEETKNKNMGREVLNLTKELELSKRYSRALRPSGNGRRMVDVPVASTGVQTEAVCGDAAEEETPAVFIRKSFQEENHIMSNLRQVGLKKPMERSSVLDRYPPAANELTMRKSWIPWMRKRENGPSTPQEKGPRPNQGAGHPGELVLAPKQGQPLHIRVTPDHENSTATLEITSPTSEEFFSSTTVIPTLGNQKPRITIIPSPNVMSQKPKSADPTLGPERAMSPVTITTISREKSPEGGRSAFADRPASPIQIMTVSTSAAPTEIAVSPESQEVPMGRTILKVTPEKQTVPAPVRKYNSNANIITTEDNKIHIHLGSQFKRSPGPAAEGVSPVITVRPVNVTAEKEVSTGTVLRSPRNHLSSRPGASKVTSTITITPVTTSSTRGTQSVSGQDGSSQRPTPTRIPMSKGMKAGKPVVAASGAGNLTKFQPRAETQSMKIELKKSAASSTASLGGGKG</sequence>
<name>FLIP1_RAT</name>
<reference key="1">
    <citation type="journal article" date="2002" name="Nat. Cell Biol.">
        <title>Filamin A-interacting protein (FILIP) regulates cortical cell migration out of the ventricular zone.</title>
        <authorList>
            <person name="Nagano T."/>
            <person name="Yoneda T."/>
            <person name="Hatanaka Y."/>
            <person name="Kubota C."/>
            <person name="Murakami F."/>
            <person name="Sato M."/>
        </authorList>
    </citation>
    <scope>NUCLEOTIDE SEQUENCE [MRNA] (ISOFORMS 1 AND 2)</scope>
    <scope>TISSUE SPECIFICITY</scope>
    <scope>INTERACTION WITH FLNA</scope>
    <scope>SUBCELLULAR LOCATION</scope>
    <scope>FUNCTION</scope>
    <source>
        <strain>Wistar</strain>
    </source>
</reference>
<reference key="2">
    <citation type="journal article" date="2005" name="Anat. Sci. Int.">
        <title>Involvement of filamin A and filamin A-interacting protein (FILIP) in controlling the start and cell shape of radially migrating cortical neurons.</title>
        <authorList>
            <person name="Sato M."/>
            <person name="Nagano T."/>
        </authorList>
    </citation>
    <scope>TISSUE SPECIFICITY</scope>
    <scope>INTERACTION WITH FLNA</scope>
    <scope>SUBCELLULAR LOCATION</scope>
    <scope>FUNCTION</scope>
</reference>
<reference key="3">
    <citation type="journal article" date="2012" name="Nat. Commun.">
        <title>Quantitative maps of protein phosphorylation sites across 14 different rat organs and tissues.</title>
        <authorList>
            <person name="Lundby A."/>
            <person name="Secher A."/>
            <person name="Lage K."/>
            <person name="Nordsborg N.B."/>
            <person name="Dmytriyev A."/>
            <person name="Lundby C."/>
            <person name="Olsen J.V."/>
        </authorList>
    </citation>
    <scope>PHOSPHORYLATION [LARGE SCALE ANALYSIS] AT SER-137</scope>
    <scope>IDENTIFICATION BY MASS SPECTROMETRY [LARGE SCALE ANALYSIS]</scope>
</reference>
<dbReference type="EMBL" id="AB055759">
    <property type="protein sequence ID" value="BAC00851.1"/>
    <property type="molecule type" value="mRNA"/>
</dbReference>
<dbReference type="EMBL" id="D87257">
    <property type="protein sequence ID" value="BAC00852.1"/>
    <property type="molecule type" value="mRNA"/>
</dbReference>
<dbReference type="RefSeq" id="NP_663715.1">
    <property type="nucleotide sequence ID" value="NM_145682.1"/>
</dbReference>
<dbReference type="SMR" id="Q8K4T4"/>
<dbReference type="FunCoup" id="Q8K4T4">
    <property type="interactions" value="154"/>
</dbReference>
<dbReference type="STRING" id="10116.ENSRNOP00000015365"/>
<dbReference type="CarbonylDB" id="Q8K4T4"/>
<dbReference type="iPTMnet" id="Q8K4T4"/>
<dbReference type="PhosphoSitePlus" id="Q8K4T4"/>
<dbReference type="PaxDb" id="10116-ENSRNOP00000015365"/>
<dbReference type="GeneID" id="246776"/>
<dbReference type="KEGG" id="rno:246776"/>
<dbReference type="UCSC" id="RGD:628597">
    <molecule id="Q8K4T4-1"/>
    <property type="organism name" value="rat"/>
</dbReference>
<dbReference type="AGR" id="RGD:628597"/>
<dbReference type="CTD" id="27145"/>
<dbReference type="RGD" id="628597">
    <property type="gene designation" value="Filip1"/>
</dbReference>
<dbReference type="eggNOG" id="ENOG502QRWK">
    <property type="taxonomic scope" value="Eukaryota"/>
</dbReference>
<dbReference type="InParanoid" id="Q8K4T4"/>
<dbReference type="PhylomeDB" id="Q8K4T4"/>
<dbReference type="Reactome" id="R-RNO-9013405">
    <property type="pathway name" value="RHOD GTPase cycle"/>
</dbReference>
<dbReference type="PRO" id="PR:Q8K4T4"/>
<dbReference type="Proteomes" id="UP000002494">
    <property type="component" value="Unplaced"/>
</dbReference>
<dbReference type="GO" id="GO:0015629">
    <property type="term" value="C:actin cytoskeleton"/>
    <property type="evidence" value="ECO:0000318"/>
    <property type="project" value="GO_Central"/>
</dbReference>
<dbReference type="GO" id="GO:0005737">
    <property type="term" value="C:cytoplasm"/>
    <property type="evidence" value="ECO:0007669"/>
    <property type="project" value="UniProtKB-KW"/>
</dbReference>
<dbReference type="GO" id="GO:0098978">
    <property type="term" value="C:glutamatergic synapse"/>
    <property type="evidence" value="ECO:0000314"/>
    <property type="project" value="SynGO"/>
</dbReference>
<dbReference type="GO" id="GO:0098794">
    <property type="term" value="C:postsynapse"/>
    <property type="evidence" value="ECO:0000314"/>
    <property type="project" value="SynGO"/>
</dbReference>
<dbReference type="GO" id="GO:0098871">
    <property type="term" value="C:postsynaptic actin cytoskeleton"/>
    <property type="evidence" value="ECO:0000314"/>
    <property type="project" value="SynGO"/>
</dbReference>
<dbReference type="GO" id="GO:0001725">
    <property type="term" value="C:stress fiber"/>
    <property type="evidence" value="ECO:0007669"/>
    <property type="project" value="UniProtKB-SubCell"/>
</dbReference>
<dbReference type="GO" id="GO:0021987">
    <property type="term" value="P:cerebral cortex development"/>
    <property type="evidence" value="ECO:0000266"/>
    <property type="project" value="RGD"/>
</dbReference>
<dbReference type="GO" id="GO:0022038">
    <property type="term" value="P:corpus callosum development"/>
    <property type="evidence" value="ECO:0000266"/>
    <property type="project" value="RGD"/>
</dbReference>
<dbReference type="GO" id="GO:0099010">
    <property type="term" value="P:modification of postsynaptic structure"/>
    <property type="evidence" value="ECO:0000266"/>
    <property type="project" value="RGD"/>
</dbReference>
<dbReference type="GO" id="GO:0001764">
    <property type="term" value="P:neuron migration"/>
    <property type="evidence" value="ECO:0000266"/>
    <property type="project" value="RGD"/>
</dbReference>
<dbReference type="GO" id="GO:1903119">
    <property type="term" value="P:protein localization to actin cytoskeleton"/>
    <property type="evidence" value="ECO:0000318"/>
    <property type="project" value="GO_Central"/>
</dbReference>
<dbReference type="Gene3D" id="1.20.5.4090">
    <property type="match status" value="1"/>
</dbReference>
<dbReference type="InterPro" id="IPR050719">
    <property type="entry name" value="Cortactin-Actin_Reg"/>
</dbReference>
<dbReference type="InterPro" id="IPR019131">
    <property type="entry name" value="Cortactin-binding_p2_N"/>
</dbReference>
<dbReference type="PANTHER" id="PTHR23166:SF3">
    <property type="entry name" value="FILAMIN-A-INTERACTING PROTEIN 1"/>
    <property type="match status" value="1"/>
</dbReference>
<dbReference type="PANTHER" id="PTHR23166">
    <property type="entry name" value="FILAMIN/GPBP-INTERACTING PROTEIN"/>
    <property type="match status" value="1"/>
</dbReference>
<dbReference type="Pfam" id="PF09727">
    <property type="entry name" value="CortBP2"/>
    <property type="match status" value="1"/>
</dbReference>
<feature type="chain" id="PRO_0000234542" description="Filamin-A-interacting protein 1">
    <location>
        <begin position="1"/>
        <end position="1212"/>
    </location>
</feature>
<feature type="region of interest" description="Disordered" evidence="3">
    <location>
        <begin position="1"/>
        <end position="73"/>
    </location>
</feature>
<feature type="region of interest" description="Disordered" evidence="3">
    <location>
        <begin position="871"/>
        <end position="898"/>
    </location>
</feature>
<feature type="region of interest" description="Disordered" evidence="3">
    <location>
        <begin position="948"/>
        <end position="975"/>
    </location>
</feature>
<feature type="region of interest" description="Disordered" evidence="3">
    <location>
        <begin position="1102"/>
        <end position="1190"/>
    </location>
</feature>
<feature type="coiled-coil region" evidence="2">
    <location>
        <begin position="191"/>
        <end position="575"/>
    </location>
</feature>
<feature type="coiled-coil region" evidence="2">
    <location>
        <begin position="623"/>
        <end position="777"/>
    </location>
</feature>
<feature type="compositionally biased region" description="Polar residues" evidence="3">
    <location>
        <begin position="1"/>
        <end position="15"/>
    </location>
</feature>
<feature type="compositionally biased region" description="Basic and acidic residues" evidence="3">
    <location>
        <begin position="32"/>
        <end position="47"/>
    </location>
</feature>
<feature type="compositionally biased region" description="Basic and acidic residues" evidence="3">
    <location>
        <begin position="60"/>
        <end position="73"/>
    </location>
</feature>
<feature type="compositionally biased region" description="Low complexity" evidence="3">
    <location>
        <begin position="1124"/>
        <end position="1138"/>
    </location>
</feature>
<feature type="compositionally biased region" description="Polar residues" evidence="3">
    <location>
        <begin position="1139"/>
        <end position="1155"/>
    </location>
</feature>
<feature type="modified residue" description="Phosphoserine" evidence="8">
    <location>
        <position position="137"/>
    </location>
</feature>
<feature type="modified residue" description="Phosphoserine" evidence="1">
    <location>
        <position position="978"/>
    </location>
</feature>
<feature type="splice variant" id="VSP_018346" description="In isoform 2." evidence="6">
    <location>
        <begin position="1"/>
        <end position="247"/>
    </location>
</feature>